<evidence type="ECO:0000256" key="1">
    <source>
        <dbReference type="SAM" id="MobiDB-lite"/>
    </source>
</evidence>
<evidence type="ECO:0000269" key="2">
    <source>
    </source>
</evidence>
<evidence type="ECO:0000269" key="3">
    <source>
    </source>
</evidence>
<evidence type="ECO:0000269" key="4">
    <source>
    </source>
</evidence>
<evidence type="ECO:0000269" key="5">
    <source>
    </source>
</evidence>
<evidence type="ECO:0000269" key="6">
    <source>
    </source>
</evidence>
<evidence type="ECO:0000269" key="7">
    <source>
    </source>
</evidence>
<evidence type="ECO:0000269" key="8">
    <source>
    </source>
</evidence>
<evidence type="ECO:0000269" key="9">
    <source>
    </source>
</evidence>
<evidence type="ECO:0000269" key="10">
    <source>
    </source>
</evidence>
<evidence type="ECO:0000305" key="11"/>
<evidence type="ECO:0007744" key="12">
    <source>
        <dbReference type="PDB" id="5MQF"/>
    </source>
</evidence>
<evidence type="ECO:0007744" key="13">
    <source>
        <dbReference type="PDB" id="5XJC"/>
    </source>
</evidence>
<evidence type="ECO:0007744" key="14">
    <source>
        <dbReference type="PDB" id="5YZG"/>
    </source>
</evidence>
<evidence type="ECO:0007744" key="15">
    <source>
        <dbReference type="PDB" id="5Z56"/>
    </source>
</evidence>
<evidence type="ECO:0007744" key="16">
    <source>
        <dbReference type="PDB" id="5Z57"/>
    </source>
</evidence>
<evidence type="ECO:0007744" key="17">
    <source>
        <dbReference type="PDB" id="6FF4"/>
    </source>
</evidence>
<evidence type="ECO:0007744" key="18">
    <source>
        <dbReference type="PDB" id="6QDV"/>
    </source>
</evidence>
<evidence type="ECO:0007744" key="19">
    <source>
    </source>
</evidence>
<evidence type="ECO:0007829" key="20">
    <source>
        <dbReference type="PDB" id="6ICZ"/>
    </source>
</evidence>
<evidence type="ECO:0007829" key="21">
    <source>
        <dbReference type="PDB" id="6ID0"/>
    </source>
</evidence>
<evidence type="ECO:0007829" key="22">
    <source>
        <dbReference type="PDB" id="6ID1"/>
    </source>
</evidence>
<name>PRP17_HUMAN</name>
<proteinExistence type="evidence at protein level"/>
<feature type="chain" id="PRO_0000051142" description="Pre-mRNA-processing factor 17">
    <location>
        <begin position="1"/>
        <end position="579"/>
    </location>
</feature>
<feature type="repeat" description="WD 1">
    <location>
        <begin position="286"/>
        <end position="326"/>
    </location>
</feature>
<feature type="repeat" description="WD 2">
    <location>
        <begin position="330"/>
        <end position="369"/>
    </location>
</feature>
<feature type="repeat" description="WD 3">
    <location>
        <begin position="371"/>
        <end position="413"/>
    </location>
</feature>
<feature type="repeat" description="WD 4">
    <location>
        <begin position="416"/>
        <end position="455"/>
    </location>
</feature>
<feature type="repeat" description="WD 5">
    <location>
        <begin position="459"/>
        <end position="498"/>
    </location>
</feature>
<feature type="repeat" description="WD 6">
    <location>
        <begin position="504"/>
        <end position="545"/>
    </location>
</feature>
<feature type="repeat" description="WD 7">
    <location>
        <begin position="548"/>
        <end position="578"/>
    </location>
</feature>
<feature type="region of interest" description="Disordered" evidence="1">
    <location>
        <begin position="1"/>
        <end position="47"/>
    </location>
</feature>
<feature type="region of interest" description="Disordered" evidence="1">
    <location>
        <begin position="204"/>
        <end position="237"/>
    </location>
</feature>
<feature type="compositionally biased region" description="Low complexity" evidence="1">
    <location>
        <begin position="1"/>
        <end position="19"/>
    </location>
</feature>
<feature type="modified residue" description="Phosphoserine" evidence="19">
    <location>
        <position position="46"/>
    </location>
</feature>
<feature type="sequence variant" id="VAR_085515" description="In PCH15; in knockdown cells, unable to rescue higher intron retention levels and to restore normal cell viability, contrary to wild-type; reduced protein levels in homozygous patient's fibroblasts compared to heterozygous or wild-type cells; dbSNP:rs779945821." evidence="9">
    <original>F</original>
    <variation>C</variation>
    <location>
        <position position="502"/>
    </location>
</feature>
<feature type="mutagenesis site" description="Loss of isomerization. Can rescue splicing defects when transfected in knockout cells." evidence="9">
    <original>P</original>
    <variation>A</variation>
    <location>
        <position position="95"/>
    </location>
</feature>
<feature type="sequence conflict" description="In Ref. 7; AAD01552." evidence="11" ref="7">
    <original>A</original>
    <variation>V</variation>
    <location>
        <position position="7"/>
    </location>
</feature>
<feature type="sequence conflict" description="In Ref. 6; AAC25166." evidence="11" ref="6">
    <original>L</original>
    <variation>P</variation>
    <location>
        <position position="31"/>
    </location>
</feature>
<feature type="sequence conflict" description="In Ref. 6; AAC25166." evidence="11" ref="6">
    <original>E</original>
    <variation>R</variation>
    <location>
        <position position="210"/>
    </location>
</feature>
<feature type="turn" evidence="22">
    <location>
        <begin position="86"/>
        <end position="88"/>
    </location>
</feature>
<feature type="helix" evidence="22">
    <location>
        <begin position="102"/>
        <end position="105"/>
    </location>
</feature>
<feature type="strand" evidence="22">
    <location>
        <begin position="109"/>
        <end position="112"/>
    </location>
</feature>
<feature type="strand" evidence="22">
    <location>
        <begin position="114"/>
        <end position="116"/>
    </location>
</feature>
<feature type="helix" evidence="22">
    <location>
        <begin position="122"/>
        <end position="134"/>
    </location>
</feature>
<feature type="strand" evidence="22">
    <location>
        <begin position="136"/>
        <end position="139"/>
    </location>
</feature>
<feature type="strand" evidence="22">
    <location>
        <begin position="143"/>
        <end position="149"/>
    </location>
</feature>
<feature type="strand" evidence="22">
    <location>
        <begin position="152"/>
        <end position="155"/>
    </location>
</feature>
<feature type="helix" evidence="22">
    <location>
        <begin position="156"/>
        <end position="161"/>
    </location>
</feature>
<feature type="turn" evidence="21">
    <location>
        <begin position="162"/>
        <end position="164"/>
    </location>
</feature>
<feature type="strand" evidence="20">
    <location>
        <begin position="167"/>
        <end position="169"/>
    </location>
</feature>
<feature type="turn" evidence="22">
    <location>
        <begin position="189"/>
        <end position="191"/>
    </location>
</feature>
<feature type="strand" evidence="20">
    <location>
        <begin position="193"/>
        <end position="195"/>
    </location>
</feature>
<feature type="strand" evidence="22">
    <location>
        <begin position="199"/>
        <end position="202"/>
    </location>
</feature>
<feature type="helix" evidence="22">
    <location>
        <begin position="212"/>
        <end position="224"/>
    </location>
</feature>
<feature type="strand" evidence="20">
    <location>
        <begin position="239"/>
        <end position="241"/>
    </location>
</feature>
<feature type="turn" evidence="21">
    <location>
        <begin position="249"/>
        <end position="251"/>
    </location>
</feature>
<feature type="strand" evidence="21">
    <location>
        <begin position="254"/>
        <end position="256"/>
    </location>
</feature>
<feature type="strand" evidence="21">
    <location>
        <begin position="261"/>
        <end position="263"/>
    </location>
</feature>
<feature type="strand" evidence="21">
    <location>
        <begin position="291"/>
        <end position="295"/>
    </location>
</feature>
<feature type="strand" evidence="21">
    <location>
        <begin position="298"/>
        <end position="302"/>
    </location>
</feature>
<feature type="strand" evidence="21">
    <location>
        <begin position="304"/>
        <end position="308"/>
    </location>
</feature>
<feature type="strand" evidence="21">
    <location>
        <begin position="311"/>
        <end position="316"/>
    </location>
</feature>
<feature type="strand" evidence="21">
    <location>
        <begin position="318"/>
        <end position="320"/>
    </location>
</feature>
<feature type="strand" evidence="20">
    <location>
        <begin position="326"/>
        <end position="329"/>
    </location>
</feature>
<feature type="strand" evidence="21">
    <location>
        <begin position="335"/>
        <end position="340"/>
    </location>
</feature>
<feature type="strand" evidence="21">
    <location>
        <begin position="342"/>
        <end position="351"/>
    </location>
</feature>
<feature type="strand" evidence="21">
    <location>
        <begin position="356"/>
        <end position="360"/>
    </location>
</feature>
<feature type="turn" evidence="21">
    <location>
        <begin position="361"/>
        <end position="363"/>
    </location>
</feature>
<feature type="strand" evidence="21">
    <location>
        <begin position="366"/>
        <end position="370"/>
    </location>
</feature>
<feature type="strand" evidence="21">
    <location>
        <begin position="376"/>
        <end position="381"/>
    </location>
</feature>
<feature type="strand" evidence="21">
    <location>
        <begin position="388"/>
        <end position="398"/>
    </location>
</feature>
<feature type="strand" evidence="21">
    <location>
        <begin position="400"/>
        <end position="404"/>
    </location>
</feature>
<feature type="turn" evidence="21">
    <location>
        <begin position="405"/>
        <end position="407"/>
    </location>
</feature>
<feature type="strand" evidence="21">
    <location>
        <begin position="410"/>
        <end position="414"/>
    </location>
</feature>
<feature type="strand" evidence="21">
    <location>
        <begin position="421"/>
        <end position="428"/>
    </location>
</feature>
<feature type="turn" evidence="21">
    <location>
        <begin position="429"/>
        <end position="431"/>
    </location>
</feature>
<feature type="strand" evidence="21">
    <location>
        <begin position="432"/>
        <end position="440"/>
    </location>
</feature>
<feature type="strand" evidence="21">
    <location>
        <begin position="442"/>
        <end position="446"/>
    </location>
</feature>
<feature type="strand" evidence="21">
    <location>
        <begin position="453"/>
        <end position="456"/>
    </location>
</feature>
<feature type="strand" evidence="21">
    <location>
        <begin position="465"/>
        <end position="469"/>
    </location>
</feature>
<feature type="strand" evidence="21">
    <location>
        <begin position="475"/>
        <end position="480"/>
    </location>
</feature>
<feature type="turn" evidence="21">
    <location>
        <begin position="481"/>
        <end position="483"/>
    </location>
</feature>
<feature type="strand" evidence="21">
    <location>
        <begin position="484"/>
        <end position="489"/>
    </location>
</feature>
<feature type="strand" evidence="21">
    <location>
        <begin position="491"/>
        <end position="493"/>
    </location>
</feature>
<feature type="strand" evidence="21">
    <location>
        <begin position="496"/>
        <end position="502"/>
    </location>
</feature>
<feature type="strand" evidence="21">
    <location>
        <begin position="514"/>
        <end position="516"/>
    </location>
</feature>
<feature type="helix" evidence="21">
    <location>
        <begin position="518"/>
        <end position="520"/>
    </location>
</feature>
<feature type="strand" evidence="21">
    <location>
        <begin position="522"/>
        <end position="525"/>
    </location>
</feature>
<feature type="strand" evidence="21">
    <location>
        <begin position="533"/>
        <end position="536"/>
    </location>
</feature>
<feature type="turn" evidence="21">
    <location>
        <begin position="537"/>
        <end position="540"/>
    </location>
</feature>
<feature type="strand" evidence="21">
    <location>
        <begin position="541"/>
        <end position="545"/>
    </location>
</feature>
<feature type="strand" evidence="21">
    <location>
        <begin position="553"/>
        <end position="558"/>
    </location>
</feature>
<feature type="strand" evidence="21">
    <location>
        <begin position="566"/>
        <end position="570"/>
    </location>
</feature>
<protein>
    <recommendedName>
        <fullName>Pre-mRNA-processing factor 17</fullName>
    </recommendedName>
    <alternativeName>
        <fullName>Cell division cycle 40 homolog</fullName>
    </alternativeName>
    <alternativeName>
        <fullName>EH-binding protein 3</fullName>
        <shortName>Ehb3</shortName>
    </alternativeName>
    <alternativeName>
        <fullName>PRP17 homolog</fullName>
        <shortName>hPRP17</shortName>
    </alternativeName>
</protein>
<organism>
    <name type="scientific">Homo sapiens</name>
    <name type="common">Human</name>
    <dbReference type="NCBI Taxonomy" id="9606"/>
    <lineage>
        <taxon>Eukaryota</taxon>
        <taxon>Metazoa</taxon>
        <taxon>Chordata</taxon>
        <taxon>Craniata</taxon>
        <taxon>Vertebrata</taxon>
        <taxon>Euteleostomi</taxon>
        <taxon>Mammalia</taxon>
        <taxon>Eutheria</taxon>
        <taxon>Euarchontoglires</taxon>
        <taxon>Primates</taxon>
        <taxon>Haplorrhini</taxon>
        <taxon>Catarrhini</taxon>
        <taxon>Hominidae</taxon>
        <taxon>Homo</taxon>
    </lineage>
</organism>
<reference key="1">
    <citation type="journal article" date="1998" name="EMBO J.">
        <title>Human homologs of yeast prp16 and prp17 reveal conservation of the mechanism for catalytic step II of pre-mRNA splicing.</title>
        <authorList>
            <person name="Zhou Z."/>
            <person name="Reed R."/>
        </authorList>
    </citation>
    <scope>NUCLEOTIDE SEQUENCE [MRNA]</scope>
    <source>
        <tissue>Colon epithelium</tissue>
    </source>
</reference>
<reference key="2">
    <citation type="journal article" date="1998" name="J. Biol. Chem.">
        <title>Functional conservation of the human homolog of the yeast pre-mRNA splicing factor Prp17p.</title>
        <authorList>
            <person name="Lindsey L.A."/>
            <person name="Garcia-Blanco M.A."/>
        </authorList>
    </citation>
    <scope>NUCLEOTIDE SEQUENCE [MRNA]</scope>
    <scope>FUNCTION</scope>
    <scope>SUBCELLULAR LOCATION</scope>
    <source>
        <tissue>Cervix carcinoma</tissue>
    </source>
</reference>
<reference key="3">
    <citation type="journal article" date="2004" name="Nat. Genet.">
        <title>Complete sequencing and characterization of 21,243 full-length human cDNAs.</title>
        <authorList>
            <person name="Ota T."/>
            <person name="Suzuki Y."/>
            <person name="Nishikawa T."/>
            <person name="Otsuki T."/>
            <person name="Sugiyama T."/>
            <person name="Irie R."/>
            <person name="Wakamatsu A."/>
            <person name="Hayashi K."/>
            <person name="Sato H."/>
            <person name="Nagai K."/>
            <person name="Kimura K."/>
            <person name="Makita H."/>
            <person name="Sekine M."/>
            <person name="Obayashi M."/>
            <person name="Nishi T."/>
            <person name="Shibahara T."/>
            <person name="Tanaka T."/>
            <person name="Ishii S."/>
            <person name="Yamamoto J."/>
            <person name="Saito K."/>
            <person name="Kawai Y."/>
            <person name="Isono Y."/>
            <person name="Nakamura Y."/>
            <person name="Nagahari K."/>
            <person name="Murakami K."/>
            <person name="Yasuda T."/>
            <person name="Iwayanagi T."/>
            <person name="Wagatsuma M."/>
            <person name="Shiratori A."/>
            <person name="Sudo H."/>
            <person name="Hosoiri T."/>
            <person name="Kaku Y."/>
            <person name="Kodaira H."/>
            <person name="Kondo H."/>
            <person name="Sugawara M."/>
            <person name="Takahashi M."/>
            <person name="Kanda K."/>
            <person name="Yokoi T."/>
            <person name="Furuya T."/>
            <person name="Kikkawa E."/>
            <person name="Omura Y."/>
            <person name="Abe K."/>
            <person name="Kamihara K."/>
            <person name="Katsuta N."/>
            <person name="Sato K."/>
            <person name="Tanikawa M."/>
            <person name="Yamazaki M."/>
            <person name="Ninomiya K."/>
            <person name="Ishibashi T."/>
            <person name="Yamashita H."/>
            <person name="Murakawa K."/>
            <person name="Fujimori K."/>
            <person name="Tanai H."/>
            <person name="Kimata M."/>
            <person name="Watanabe M."/>
            <person name="Hiraoka S."/>
            <person name="Chiba Y."/>
            <person name="Ishida S."/>
            <person name="Ono Y."/>
            <person name="Takiguchi S."/>
            <person name="Watanabe S."/>
            <person name="Yosida M."/>
            <person name="Hotuta T."/>
            <person name="Kusano J."/>
            <person name="Kanehori K."/>
            <person name="Takahashi-Fujii A."/>
            <person name="Hara H."/>
            <person name="Tanase T.-O."/>
            <person name="Nomura Y."/>
            <person name="Togiya S."/>
            <person name="Komai F."/>
            <person name="Hara R."/>
            <person name="Takeuchi K."/>
            <person name="Arita M."/>
            <person name="Imose N."/>
            <person name="Musashino K."/>
            <person name="Yuuki H."/>
            <person name="Oshima A."/>
            <person name="Sasaki N."/>
            <person name="Aotsuka S."/>
            <person name="Yoshikawa Y."/>
            <person name="Matsunawa H."/>
            <person name="Ichihara T."/>
            <person name="Shiohata N."/>
            <person name="Sano S."/>
            <person name="Moriya S."/>
            <person name="Momiyama H."/>
            <person name="Satoh N."/>
            <person name="Takami S."/>
            <person name="Terashima Y."/>
            <person name="Suzuki O."/>
            <person name="Nakagawa S."/>
            <person name="Senoh A."/>
            <person name="Mizoguchi H."/>
            <person name="Goto Y."/>
            <person name="Shimizu F."/>
            <person name="Wakebe H."/>
            <person name="Hishigaki H."/>
            <person name="Watanabe T."/>
            <person name="Sugiyama A."/>
            <person name="Takemoto M."/>
            <person name="Kawakami B."/>
            <person name="Yamazaki M."/>
            <person name="Watanabe K."/>
            <person name="Kumagai A."/>
            <person name="Itakura S."/>
            <person name="Fukuzumi Y."/>
            <person name="Fujimori Y."/>
            <person name="Komiyama M."/>
            <person name="Tashiro H."/>
            <person name="Tanigami A."/>
            <person name="Fujiwara T."/>
            <person name="Ono T."/>
            <person name="Yamada K."/>
            <person name="Fujii Y."/>
            <person name="Ozaki K."/>
            <person name="Hirao M."/>
            <person name="Ohmori Y."/>
            <person name="Kawabata A."/>
            <person name="Hikiji T."/>
            <person name="Kobatake N."/>
            <person name="Inagaki H."/>
            <person name="Ikema Y."/>
            <person name="Okamoto S."/>
            <person name="Okitani R."/>
            <person name="Kawakami T."/>
            <person name="Noguchi S."/>
            <person name="Itoh T."/>
            <person name="Shigeta K."/>
            <person name="Senba T."/>
            <person name="Matsumura K."/>
            <person name="Nakajima Y."/>
            <person name="Mizuno T."/>
            <person name="Morinaga M."/>
            <person name="Sasaki M."/>
            <person name="Togashi T."/>
            <person name="Oyama M."/>
            <person name="Hata H."/>
            <person name="Watanabe M."/>
            <person name="Komatsu T."/>
            <person name="Mizushima-Sugano J."/>
            <person name="Satoh T."/>
            <person name="Shirai Y."/>
            <person name="Takahashi Y."/>
            <person name="Nakagawa K."/>
            <person name="Okumura K."/>
            <person name="Nagase T."/>
            <person name="Nomura N."/>
            <person name="Kikuchi H."/>
            <person name="Masuho Y."/>
            <person name="Yamashita R."/>
            <person name="Nakai K."/>
            <person name="Yada T."/>
            <person name="Nakamura Y."/>
            <person name="Ohara O."/>
            <person name="Isogai T."/>
            <person name="Sugano S."/>
        </authorList>
    </citation>
    <scope>NUCLEOTIDE SEQUENCE [LARGE SCALE MRNA]</scope>
    <source>
        <tissue>Trachea</tissue>
    </source>
</reference>
<reference key="4">
    <citation type="journal article" date="2003" name="Nature">
        <title>The DNA sequence and analysis of human chromosome 6.</title>
        <authorList>
            <person name="Mungall A.J."/>
            <person name="Palmer S.A."/>
            <person name="Sims S.K."/>
            <person name="Edwards C.A."/>
            <person name="Ashurst J.L."/>
            <person name="Wilming L."/>
            <person name="Jones M.C."/>
            <person name="Horton R."/>
            <person name="Hunt S.E."/>
            <person name="Scott C.E."/>
            <person name="Gilbert J.G.R."/>
            <person name="Clamp M.E."/>
            <person name="Bethel G."/>
            <person name="Milne S."/>
            <person name="Ainscough R."/>
            <person name="Almeida J.P."/>
            <person name="Ambrose K.D."/>
            <person name="Andrews T.D."/>
            <person name="Ashwell R.I.S."/>
            <person name="Babbage A.K."/>
            <person name="Bagguley C.L."/>
            <person name="Bailey J."/>
            <person name="Banerjee R."/>
            <person name="Barker D.J."/>
            <person name="Barlow K.F."/>
            <person name="Bates K."/>
            <person name="Beare D.M."/>
            <person name="Beasley H."/>
            <person name="Beasley O."/>
            <person name="Bird C.P."/>
            <person name="Blakey S.E."/>
            <person name="Bray-Allen S."/>
            <person name="Brook J."/>
            <person name="Brown A.J."/>
            <person name="Brown J.Y."/>
            <person name="Burford D.C."/>
            <person name="Burrill W."/>
            <person name="Burton J."/>
            <person name="Carder C."/>
            <person name="Carter N.P."/>
            <person name="Chapman J.C."/>
            <person name="Clark S.Y."/>
            <person name="Clark G."/>
            <person name="Clee C.M."/>
            <person name="Clegg S."/>
            <person name="Cobley V."/>
            <person name="Collier R.E."/>
            <person name="Collins J.E."/>
            <person name="Colman L.K."/>
            <person name="Corby N.R."/>
            <person name="Coville G.J."/>
            <person name="Culley K.M."/>
            <person name="Dhami P."/>
            <person name="Davies J."/>
            <person name="Dunn M."/>
            <person name="Earthrowl M.E."/>
            <person name="Ellington A.E."/>
            <person name="Evans K.A."/>
            <person name="Faulkner L."/>
            <person name="Francis M.D."/>
            <person name="Frankish A."/>
            <person name="Frankland J."/>
            <person name="French L."/>
            <person name="Garner P."/>
            <person name="Garnett J."/>
            <person name="Ghori M.J."/>
            <person name="Gilby L.M."/>
            <person name="Gillson C.J."/>
            <person name="Glithero R.J."/>
            <person name="Grafham D.V."/>
            <person name="Grant M."/>
            <person name="Gribble S."/>
            <person name="Griffiths C."/>
            <person name="Griffiths M.N.D."/>
            <person name="Hall R."/>
            <person name="Halls K.S."/>
            <person name="Hammond S."/>
            <person name="Harley J.L."/>
            <person name="Hart E.A."/>
            <person name="Heath P.D."/>
            <person name="Heathcott R."/>
            <person name="Holmes S.J."/>
            <person name="Howden P.J."/>
            <person name="Howe K.L."/>
            <person name="Howell G.R."/>
            <person name="Huckle E."/>
            <person name="Humphray S.J."/>
            <person name="Humphries M.D."/>
            <person name="Hunt A.R."/>
            <person name="Johnson C.M."/>
            <person name="Joy A.A."/>
            <person name="Kay M."/>
            <person name="Keenan S.J."/>
            <person name="Kimberley A.M."/>
            <person name="King A."/>
            <person name="Laird G.K."/>
            <person name="Langford C."/>
            <person name="Lawlor S."/>
            <person name="Leongamornlert D.A."/>
            <person name="Leversha M."/>
            <person name="Lloyd C.R."/>
            <person name="Lloyd D.M."/>
            <person name="Loveland J.E."/>
            <person name="Lovell J."/>
            <person name="Martin S."/>
            <person name="Mashreghi-Mohammadi M."/>
            <person name="Maslen G.L."/>
            <person name="Matthews L."/>
            <person name="McCann O.T."/>
            <person name="McLaren S.J."/>
            <person name="McLay K."/>
            <person name="McMurray A."/>
            <person name="Moore M.J.F."/>
            <person name="Mullikin J.C."/>
            <person name="Niblett D."/>
            <person name="Nickerson T."/>
            <person name="Novik K.L."/>
            <person name="Oliver K."/>
            <person name="Overton-Larty E.K."/>
            <person name="Parker A."/>
            <person name="Patel R."/>
            <person name="Pearce A.V."/>
            <person name="Peck A.I."/>
            <person name="Phillimore B.J.C.T."/>
            <person name="Phillips S."/>
            <person name="Plumb R.W."/>
            <person name="Porter K.M."/>
            <person name="Ramsey Y."/>
            <person name="Ranby S.A."/>
            <person name="Rice C.M."/>
            <person name="Ross M.T."/>
            <person name="Searle S.M."/>
            <person name="Sehra H.K."/>
            <person name="Sheridan E."/>
            <person name="Skuce C.D."/>
            <person name="Smith S."/>
            <person name="Smith M."/>
            <person name="Spraggon L."/>
            <person name="Squares S.L."/>
            <person name="Steward C.A."/>
            <person name="Sycamore N."/>
            <person name="Tamlyn-Hall G."/>
            <person name="Tester J."/>
            <person name="Theaker A.J."/>
            <person name="Thomas D.W."/>
            <person name="Thorpe A."/>
            <person name="Tracey A."/>
            <person name="Tromans A."/>
            <person name="Tubby B."/>
            <person name="Wall M."/>
            <person name="Wallis J.M."/>
            <person name="West A.P."/>
            <person name="White S.S."/>
            <person name="Whitehead S.L."/>
            <person name="Whittaker H."/>
            <person name="Wild A."/>
            <person name="Willey D.J."/>
            <person name="Wilmer T.E."/>
            <person name="Wood J.M."/>
            <person name="Wray P.W."/>
            <person name="Wyatt J.C."/>
            <person name="Young L."/>
            <person name="Younger R.M."/>
            <person name="Bentley D.R."/>
            <person name="Coulson A."/>
            <person name="Durbin R.M."/>
            <person name="Hubbard T."/>
            <person name="Sulston J.E."/>
            <person name="Dunham I."/>
            <person name="Rogers J."/>
            <person name="Beck S."/>
        </authorList>
    </citation>
    <scope>NUCLEOTIDE SEQUENCE [LARGE SCALE GENOMIC DNA]</scope>
</reference>
<reference key="5">
    <citation type="journal article" date="2004" name="Genome Res.">
        <title>The status, quality, and expansion of the NIH full-length cDNA project: the Mammalian Gene Collection (MGC).</title>
        <authorList>
            <consortium name="The MGC Project Team"/>
        </authorList>
    </citation>
    <scope>NUCLEOTIDE SEQUENCE [LARGE SCALE MRNA]</scope>
    <source>
        <tissue>Brain</tissue>
    </source>
</reference>
<reference key="6">
    <citation type="journal article" date="1998" name="RNA">
        <title>Identification and functional analysis of hPRP17, the human homologue of the PRP17/CDC40 yeast gene involved in splicing and cell cycle control.</title>
        <authorList>
            <person name="Ben-Yehuda S."/>
            <person name="Dix I."/>
            <person name="Russell C.S."/>
            <person name="Levy S."/>
            <person name="Beggs J.D."/>
            <person name="Kupiec M."/>
        </authorList>
    </citation>
    <scope>NUCLEOTIDE SEQUENCE [MRNA] OF 3-579</scope>
</reference>
<reference key="7">
    <citation type="journal article" date="1997" name="Genes Dev.">
        <title>Binding specificity and in vivo targets of the EH domain, a novel protein-protein interaction module.</title>
        <authorList>
            <person name="Salcini A.E."/>
            <person name="Confalonieri S."/>
            <person name="Doria M."/>
            <person name="Santolini E."/>
            <person name="Tassi E."/>
            <person name="Minenkova O."/>
            <person name="Cesareni G."/>
            <person name="Pelicci P.G."/>
            <person name="Di Fiore P.P."/>
        </authorList>
    </citation>
    <scope>NUCLEOTIDE SEQUENCE [MRNA] OF 4-173</scope>
</reference>
<reference key="8">
    <citation type="journal article" date="2002" name="RNA">
        <title>Purification and characterization of native spliceosomes suitable for three-dimensional structural analysis.</title>
        <authorList>
            <person name="Jurica M.S."/>
            <person name="Licklider L.J."/>
            <person name="Gygi S.P."/>
            <person name="Grigorieff N."/>
            <person name="Moore M.J."/>
        </authorList>
    </citation>
    <scope>IDENTIFICATION BY MASS SPECTROMETRY</scope>
    <scope>IDENTIFICATION IN THE SPLICEOSOMAL C COMPLEX</scope>
</reference>
<reference key="9">
    <citation type="journal article" date="2008" name="Proc. Natl. Acad. Sci. U.S.A.">
        <title>A quantitative atlas of mitotic phosphorylation.</title>
        <authorList>
            <person name="Dephoure N."/>
            <person name="Zhou C."/>
            <person name="Villen J."/>
            <person name="Beausoleil S.A."/>
            <person name="Bakalarski C.E."/>
            <person name="Elledge S.J."/>
            <person name="Gygi S.P."/>
        </authorList>
    </citation>
    <scope>IDENTIFICATION BY MASS SPECTROMETRY [LARGE SCALE ANALYSIS]</scope>
    <source>
        <tissue>Cervix carcinoma</tissue>
    </source>
</reference>
<reference key="10">
    <citation type="journal article" date="2009" name="Sci. Signal.">
        <title>Quantitative phosphoproteomic analysis of T cell receptor signaling reveals system-wide modulation of protein-protein interactions.</title>
        <authorList>
            <person name="Mayya V."/>
            <person name="Lundgren D.H."/>
            <person name="Hwang S.-I."/>
            <person name="Rezaul K."/>
            <person name="Wu L."/>
            <person name="Eng J.K."/>
            <person name="Rodionov V."/>
            <person name="Han D.K."/>
        </authorList>
    </citation>
    <scope>IDENTIFICATION BY MASS SPECTROMETRY [LARGE SCALE ANALYSIS]</scope>
    <source>
        <tissue>Leukemic T-cell</tissue>
    </source>
</reference>
<reference key="11">
    <citation type="journal article" date="2010" name="Sci. Signal.">
        <title>Quantitative phosphoproteomics reveals widespread full phosphorylation site occupancy during mitosis.</title>
        <authorList>
            <person name="Olsen J.V."/>
            <person name="Vermeulen M."/>
            <person name="Santamaria A."/>
            <person name="Kumar C."/>
            <person name="Miller M.L."/>
            <person name="Jensen L.J."/>
            <person name="Gnad F."/>
            <person name="Cox J."/>
            <person name="Jensen T.S."/>
            <person name="Nigg E.A."/>
            <person name="Brunak S."/>
            <person name="Mann M."/>
        </authorList>
    </citation>
    <scope>IDENTIFICATION BY MASS SPECTROMETRY [LARGE SCALE ANALYSIS]</scope>
    <source>
        <tissue>Cervix carcinoma</tissue>
    </source>
</reference>
<reference key="12">
    <citation type="journal article" date="2011" name="Sci. Signal.">
        <title>System-wide temporal characterization of the proteome and phosphoproteome of human embryonic stem cell differentiation.</title>
        <authorList>
            <person name="Rigbolt K.T."/>
            <person name="Prokhorova T.A."/>
            <person name="Akimov V."/>
            <person name="Henningsen J."/>
            <person name="Johansen P.T."/>
            <person name="Kratchmarova I."/>
            <person name="Kassem M."/>
            <person name="Mann M."/>
            <person name="Olsen J.V."/>
            <person name="Blagoev B."/>
        </authorList>
    </citation>
    <scope>IDENTIFICATION BY MASS SPECTROMETRY [LARGE SCALE ANALYSIS]</scope>
</reference>
<reference key="13">
    <citation type="journal article" date="2013" name="J. Proteome Res.">
        <title>Toward a comprehensive characterization of a human cancer cell phosphoproteome.</title>
        <authorList>
            <person name="Zhou H."/>
            <person name="Di Palma S."/>
            <person name="Preisinger C."/>
            <person name="Peng M."/>
            <person name="Polat A.N."/>
            <person name="Heck A.J."/>
            <person name="Mohammed S."/>
        </authorList>
    </citation>
    <scope>PHOSPHORYLATION [LARGE SCALE ANALYSIS] AT SER-46</scope>
    <scope>IDENTIFICATION BY MASS SPECTROMETRY [LARGE SCALE ANALYSIS]</scope>
    <source>
        <tissue>Cervix carcinoma</tissue>
        <tissue>Erythroleukemia</tissue>
    </source>
</reference>
<reference key="14">
    <citation type="journal article" date="2014" name="J. Proteomics">
        <title>An enzyme assisted RP-RPLC approach for in-depth analysis of human liver phosphoproteome.</title>
        <authorList>
            <person name="Bian Y."/>
            <person name="Song C."/>
            <person name="Cheng K."/>
            <person name="Dong M."/>
            <person name="Wang F."/>
            <person name="Huang J."/>
            <person name="Sun D."/>
            <person name="Wang L."/>
            <person name="Ye M."/>
            <person name="Zou H."/>
        </authorList>
    </citation>
    <scope>IDENTIFICATION BY MASS SPECTROMETRY [LARGE SCALE ANALYSIS]</scope>
    <source>
        <tissue>Liver</tissue>
    </source>
</reference>
<reference key="15">
    <citation type="journal article" date="2021" name="Neuron">
        <title>Mutations in Spliceosomal Genes PPIL1 and PRP17 Cause Neurodegenerative Pontocerebellar Hypoplasia with Microcephaly.</title>
        <authorList>
            <person name="Chai G."/>
            <person name="Webb A."/>
            <person name="Li C."/>
            <person name="Antaki D."/>
            <person name="Lee S."/>
            <person name="Breuss M.W."/>
            <person name="Lang N."/>
            <person name="Stanley V."/>
            <person name="Anzenberg P."/>
            <person name="Yang X."/>
            <person name="Marshall T."/>
            <person name="Gaffney P."/>
            <person name="Wierenga K.J."/>
            <person name="Chung B.H."/>
            <person name="Tsang M.H."/>
            <person name="Pais L.S."/>
            <person name="Lovgren A.K."/>
            <person name="VanNoy G.E."/>
            <person name="Rehm H.L."/>
            <person name="Mirzaa G."/>
            <person name="Leon E."/>
            <person name="Diaz J."/>
            <person name="Neumann A."/>
            <person name="Kalverda A.P."/>
            <person name="Manfield I.W."/>
            <person name="Parry D.A."/>
            <person name="Logan C.V."/>
            <person name="Johnson C.A."/>
            <person name="Bonthron D.T."/>
            <person name="Valleley E.M.A."/>
            <person name="Issa M.Y."/>
            <person name="Abdel-Ghafar S.F."/>
            <person name="Abdel-Hamid M.S."/>
            <person name="Jennings P."/>
            <person name="Zaki M.S."/>
            <person name="Sheridan E."/>
            <person name="Gleeson J.G."/>
        </authorList>
    </citation>
    <scope>INVOLVEMENT IN PCH15</scope>
    <scope>VARIANT PCH15 CYS-502</scope>
    <scope>CHARACTERIZATION OF VARIANT PCH15 CYS-502</scope>
    <scope>FUNCTION</scope>
    <scope>INTERACTION WITH PPIL1</scope>
    <scope>MUTAGENESIS OF PRO-95</scope>
</reference>
<reference evidence="13" key="16">
    <citation type="journal article" date="2017" name="Cell">
        <title>An Atomic Structure of the Human Spliceosome.</title>
        <authorList>
            <person name="Zhang X."/>
            <person name="Yan C."/>
            <person name="Hang J."/>
            <person name="Finci L.I."/>
            <person name="Lei J."/>
            <person name="Shi Y."/>
        </authorList>
    </citation>
    <scope>STRUCTURE BY ELECTRON MICROSCOPY (3.60 ANGSTROMS)</scope>
    <scope>FUNCTION</scope>
    <scope>SUBCELLULAR LOCATION</scope>
    <scope>SUBUNIT</scope>
</reference>
<reference evidence="12" key="17">
    <citation type="journal article" date="2017" name="Nature">
        <title>Cryo-EM structure of a human spliceosome activated for step 2 of splicing.</title>
        <authorList>
            <person name="Bertram K."/>
            <person name="Agafonov D.E."/>
            <person name="Liu W.T."/>
            <person name="Dybkov O."/>
            <person name="Will C.L."/>
            <person name="Hartmuth K."/>
            <person name="Urlaub H."/>
            <person name="Kastner B."/>
            <person name="Stark H."/>
            <person name="Luhrmann R."/>
        </authorList>
    </citation>
    <scope>STRUCTURE BY ELECTRON MICROSCOPY (5.90 ANGSTROMS)</scope>
    <scope>FUNCTION</scope>
    <scope>SUBCELLULAR LOCATION</scope>
    <scope>SUBUNIT</scope>
</reference>
<reference evidence="17" key="18">
    <citation type="journal article" date="2018" name="Cell">
        <title>Structure and Conformational Dynamics of the Human Spliceosomal Bact Complex.</title>
        <authorList>
            <person name="Haselbach D."/>
            <person name="Komarov I."/>
            <person name="Agafonov D.E."/>
            <person name="Hartmuth K."/>
            <person name="Graf B."/>
            <person name="Dybkov O."/>
            <person name="Urlaub H."/>
            <person name="Kastner B."/>
            <person name="Luhrmann R."/>
            <person name="Stark H."/>
        </authorList>
    </citation>
    <scope>STRUCTURE BY ELECTRON MICROSCOPY (3.40 ANGSTROMS)</scope>
    <scope>FUNCTION</scope>
    <scope>SUBCELLULAR LOCATION</scope>
    <scope>SUBUNIT</scope>
</reference>
<reference evidence="15 16" key="19">
    <citation type="journal article" date="2018" name="Cell Res.">
        <title>Structure of the human activated spliceosome in three conformational states.</title>
        <authorList>
            <person name="Zhang X."/>
            <person name="Yan C."/>
            <person name="Zhan X."/>
            <person name="Li L."/>
            <person name="Lei J."/>
            <person name="Shi Y."/>
        </authorList>
    </citation>
    <scope>STRUCTURE BY ELECTRON MICROSCOPY (5.10 ANGSTROMS)</scope>
    <scope>FUNCTION</scope>
    <scope>SUBCELLULAR LOCATION</scope>
    <scope>SUBUNIT</scope>
</reference>
<reference evidence="14" key="20">
    <citation type="journal article" date="2018" name="Science">
        <title>Structure of a human catalytic step I spliceosome.</title>
        <authorList>
            <person name="Zhan X."/>
            <person name="Yan C."/>
            <person name="Zhang X."/>
            <person name="Lei J."/>
            <person name="Shi Y."/>
        </authorList>
    </citation>
    <scope>STRUCTURE BY ELECTRON MICROSCOPY (4.10 ANGSTROMS)</scope>
    <scope>FUNCTION</scope>
    <scope>SUBCELLULAR LOCATION</scope>
    <scope>SUBUNIT</scope>
</reference>
<reference evidence="18" key="21">
    <citation type="journal article" date="2019" name="Science">
        <title>A human postcatalytic spliceosome structure reveals essential roles of metazoan factors for exon ligation.</title>
        <authorList>
            <person name="Fica S.M."/>
            <person name="Oubridge C."/>
            <person name="Wilkinson M.E."/>
            <person name="Newman A.J."/>
            <person name="Nagai K."/>
        </authorList>
    </citation>
    <scope>STRUCTURE BY ELECTRON MICROSCOPY (3.30 ANGSTROMS) OF 67-579</scope>
    <scope>FUNCTION</scope>
    <scope>SUBCELLULAR LOCATION</scope>
    <scope>SUBUNIT</scope>
</reference>
<dbReference type="EMBL" id="AF038392">
    <property type="protein sequence ID" value="AAC39730.1"/>
    <property type="molecule type" value="mRNA"/>
</dbReference>
<dbReference type="EMBL" id="AL671518">
    <property type="status" value="NOT_ANNOTATED_CDS"/>
    <property type="molecule type" value="Genomic_DNA"/>
</dbReference>
<dbReference type="EMBL" id="AK314601">
    <property type="protein sequence ID" value="BAG37172.1"/>
    <property type="molecule type" value="mRNA"/>
</dbReference>
<dbReference type="EMBL" id="BC117145">
    <property type="protein sequence ID" value="AAI17146.1"/>
    <property type="molecule type" value="mRNA"/>
</dbReference>
<dbReference type="EMBL" id="BC126114">
    <property type="protein sequence ID" value="AAI26115.1"/>
    <property type="molecule type" value="mRNA"/>
</dbReference>
<dbReference type="EMBL" id="AF061241">
    <property type="protein sequence ID" value="AAC25166.1"/>
    <property type="status" value="ALT_INIT"/>
    <property type="molecule type" value="mRNA"/>
</dbReference>
<dbReference type="EMBL" id="AF015044">
    <property type="protein sequence ID" value="AAD01552.1"/>
    <property type="molecule type" value="mRNA"/>
</dbReference>
<dbReference type="CCDS" id="CCDS5081.1"/>
<dbReference type="RefSeq" id="NP_056975.1">
    <property type="nucleotide sequence ID" value="NM_015891.3"/>
</dbReference>
<dbReference type="RefSeq" id="XP_054211555.1">
    <property type="nucleotide sequence ID" value="XM_054355580.1"/>
</dbReference>
<dbReference type="PDB" id="5MQF">
    <property type="method" value="EM"/>
    <property type="resolution" value="5.90 A"/>
    <property type="chains" value="E=1-579"/>
</dbReference>
<dbReference type="PDB" id="5XJC">
    <property type="method" value="EM"/>
    <property type="resolution" value="3.60 A"/>
    <property type="chains" value="W=1-579"/>
</dbReference>
<dbReference type="PDB" id="5YZG">
    <property type="method" value="EM"/>
    <property type="resolution" value="4.10 A"/>
    <property type="chains" value="W=1-579"/>
</dbReference>
<dbReference type="PDB" id="5Z56">
    <property type="method" value="EM"/>
    <property type="resolution" value="5.10 A"/>
    <property type="chains" value="W=1-579"/>
</dbReference>
<dbReference type="PDB" id="5Z57">
    <property type="method" value="EM"/>
    <property type="resolution" value="6.50 A"/>
    <property type="chains" value="W=1-579"/>
</dbReference>
<dbReference type="PDB" id="6FF4">
    <property type="method" value="EM"/>
    <property type="resolution" value="16.00 A"/>
    <property type="chains" value="E=1-579"/>
</dbReference>
<dbReference type="PDB" id="6FF7">
    <property type="method" value="EM"/>
    <property type="resolution" value="4.50 A"/>
    <property type="chains" value="E=1-579"/>
</dbReference>
<dbReference type="PDB" id="6ICZ">
    <property type="method" value="EM"/>
    <property type="resolution" value="3.00 A"/>
    <property type="chains" value="W=1-579"/>
</dbReference>
<dbReference type="PDB" id="6ID0">
    <property type="method" value="EM"/>
    <property type="resolution" value="2.90 A"/>
    <property type="chains" value="W=1-579"/>
</dbReference>
<dbReference type="PDB" id="6ID1">
    <property type="method" value="EM"/>
    <property type="resolution" value="2.86 A"/>
    <property type="chains" value="W=1-579"/>
</dbReference>
<dbReference type="PDB" id="6QDV">
    <property type="method" value="EM"/>
    <property type="resolution" value="3.30 A"/>
    <property type="chains" value="o=67-579"/>
</dbReference>
<dbReference type="PDB" id="6ZYM">
    <property type="method" value="EM"/>
    <property type="resolution" value="3.40 A"/>
    <property type="chains" value="E=1-579"/>
</dbReference>
<dbReference type="PDB" id="7A5P">
    <property type="method" value="EM"/>
    <property type="resolution" value="5.00 A"/>
    <property type="chains" value="E=1-579"/>
</dbReference>
<dbReference type="PDB" id="7AAV">
    <property type="method" value="EM"/>
    <property type="resolution" value="4.20 A"/>
    <property type="chains" value="8=1-579"/>
</dbReference>
<dbReference type="PDB" id="7ABI">
    <property type="method" value="EM"/>
    <property type="resolution" value="8.00 A"/>
    <property type="chains" value="8=1-579"/>
</dbReference>
<dbReference type="PDB" id="7W59">
    <property type="method" value="EM"/>
    <property type="resolution" value="3.60 A"/>
    <property type="chains" value="W=1-579"/>
</dbReference>
<dbReference type="PDB" id="7W5A">
    <property type="method" value="EM"/>
    <property type="resolution" value="3.60 A"/>
    <property type="chains" value="W=1-579"/>
</dbReference>
<dbReference type="PDB" id="7W5B">
    <property type="method" value="EM"/>
    <property type="resolution" value="4.30 A"/>
    <property type="chains" value="W=1-579"/>
</dbReference>
<dbReference type="PDB" id="8C6J">
    <property type="method" value="EM"/>
    <property type="resolution" value="2.80 A"/>
    <property type="chains" value="o=1-579"/>
</dbReference>
<dbReference type="PDB" id="8CH6">
    <property type="method" value="EM"/>
    <property type="resolution" value="5.90 A"/>
    <property type="chains" value="x=1-579"/>
</dbReference>
<dbReference type="PDB" id="8I0T">
    <property type="method" value="EM"/>
    <property type="resolution" value="3.00 A"/>
    <property type="chains" value="W=1-579"/>
</dbReference>
<dbReference type="PDB" id="8I0U">
    <property type="method" value="EM"/>
    <property type="resolution" value="3.30 A"/>
    <property type="chains" value="W=1-579"/>
</dbReference>
<dbReference type="PDB" id="8I0V">
    <property type="method" value="EM"/>
    <property type="resolution" value="3.00 A"/>
    <property type="chains" value="W=1-579"/>
</dbReference>
<dbReference type="PDB" id="8I0W">
    <property type="method" value="EM"/>
    <property type="resolution" value="3.40 A"/>
    <property type="chains" value="W=1-579"/>
</dbReference>
<dbReference type="PDB" id="8RO2">
    <property type="method" value="EM"/>
    <property type="resolution" value="3.50 A"/>
    <property type="chains" value="W=1-579"/>
</dbReference>
<dbReference type="PDB" id="9FMD">
    <property type="method" value="EM"/>
    <property type="resolution" value="3.30 A"/>
    <property type="chains" value="W=1-579"/>
</dbReference>
<dbReference type="PDBsum" id="5MQF"/>
<dbReference type="PDBsum" id="5XJC"/>
<dbReference type="PDBsum" id="5YZG"/>
<dbReference type="PDBsum" id="5Z56"/>
<dbReference type="PDBsum" id="5Z57"/>
<dbReference type="PDBsum" id="6FF4"/>
<dbReference type="PDBsum" id="6FF7"/>
<dbReference type="PDBsum" id="6ICZ"/>
<dbReference type="PDBsum" id="6ID0"/>
<dbReference type="PDBsum" id="6ID1"/>
<dbReference type="PDBsum" id="6QDV"/>
<dbReference type="PDBsum" id="6ZYM"/>
<dbReference type="PDBsum" id="7A5P"/>
<dbReference type="PDBsum" id="7AAV"/>
<dbReference type="PDBsum" id="7ABI"/>
<dbReference type="PDBsum" id="7W59"/>
<dbReference type="PDBsum" id="7W5A"/>
<dbReference type="PDBsum" id="7W5B"/>
<dbReference type="PDBsum" id="8C6J"/>
<dbReference type="PDBsum" id="8CH6"/>
<dbReference type="PDBsum" id="8I0T"/>
<dbReference type="PDBsum" id="8I0U"/>
<dbReference type="PDBsum" id="8I0V"/>
<dbReference type="PDBsum" id="8I0W"/>
<dbReference type="PDBsum" id="8RO2"/>
<dbReference type="PDBsum" id="9FMD"/>
<dbReference type="EMDB" id="EMD-11569"/>
<dbReference type="EMDB" id="EMD-11693"/>
<dbReference type="EMDB" id="EMD-11697"/>
<dbReference type="EMDB" id="EMD-16452"/>
<dbReference type="EMDB" id="EMD-16658"/>
<dbReference type="EMDB" id="EMD-19399"/>
<dbReference type="EMDB" id="EMD-32317"/>
<dbReference type="EMDB" id="EMD-32319"/>
<dbReference type="EMDB" id="EMD-32321"/>
<dbReference type="EMDB" id="EMD-35109"/>
<dbReference type="EMDB" id="EMD-35110"/>
<dbReference type="EMDB" id="EMD-35111"/>
<dbReference type="EMDB" id="EMD-35113"/>
<dbReference type="EMDB" id="EMD-3545"/>
<dbReference type="EMDB" id="EMD-4255"/>
<dbReference type="EMDB" id="EMD-4525"/>
<dbReference type="EMDB" id="EMD-6721"/>
<dbReference type="EMDB" id="EMD-6864"/>
<dbReference type="EMDB" id="EMD-6889"/>
<dbReference type="EMDB" id="EMD-6890"/>
<dbReference type="EMDB" id="EMD-9645"/>
<dbReference type="EMDB" id="EMD-9646"/>
<dbReference type="EMDB" id="EMD-9647"/>
<dbReference type="SMR" id="O60508"/>
<dbReference type="BioGRID" id="119497">
    <property type="interactions" value="140"/>
</dbReference>
<dbReference type="CORUM" id="O60508"/>
<dbReference type="FunCoup" id="O60508">
    <property type="interactions" value="2738"/>
</dbReference>
<dbReference type="IntAct" id="O60508">
    <property type="interactions" value="78"/>
</dbReference>
<dbReference type="MINT" id="O60508"/>
<dbReference type="STRING" id="9606.ENSP00000357928"/>
<dbReference type="iPTMnet" id="O60508"/>
<dbReference type="PhosphoSitePlus" id="O60508"/>
<dbReference type="SwissPalm" id="O60508"/>
<dbReference type="BioMuta" id="CDC40"/>
<dbReference type="jPOST" id="O60508"/>
<dbReference type="MassIVE" id="O60508"/>
<dbReference type="PaxDb" id="9606-ENSP00000357928"/>
<dbReference type="PeptideAtlas" id="O60508"/>
<dbReference type="ProteomicsDB" id="49450"/>
<dbReference type="Pumba" id="O60508"/>
<dbReference type="Antibodypedia" id="32306">
    <property type="antibodies" value="149 antibodies from 28 providers"/>
</dbReference>
<dbReference type="DNASU" id="51362"/>
<dbReference type="Ensembl" id="ENST00000307731.2">
    <property type="protein sequence ID" value="ENSP00000304370.1"/>
    <property type="gene ID" value="ENSG00000168438.15"/>
</dbReference>
<dbReference type="Ensembl" id="ENST00000368932.5">
    <property type="protein sequence ID" value="ENSP00000357928.1"/>
    <property type="gene ID" value="ENSG00000168438.15"/>
</dbReference>
<dbReference type="GeneID" id="51362"/>
<dbReference type="KEGG" id="hsa:51362"/>
<dbReference type="MANE-Select" id="ENST00000307731.2">
    <property type="protein sequence ID" value="ENSP00000304370.1"/>
    <property type="RefSeq nucleotide sequence ID" value="NM_015891.3"/>
    <property type="RefSeq protein sequence ID" value="NP_056975.1"/>
</dbReference>
<dbReference type="UCSC" id="uc003pua.4">
    <property type="organism name" value="human"/>
</dbReference>
<dbReference type="AGR" id="HGNC:17350"/>
<dbReference type="CTD" id="51362"/>
<dbReference type="DisGeNET" id="51362"/>
<dbReference type="GeneCards" id="CDC40"/>
<dbReference type="HGNC" id="HGNC:17350">
    <property type="gene designation" value="CDC40"/>
</dbReference>
<dbReference type="HPA" id="ENSG00000168438">
    <property type="expression patterns" value="Low tissue specificity"/>
</dbReference>
<dbReference type="MalaCards" id="CDC40"/>
<dbReference type="MIM" id="605585">
    <property type="type" value="gene"/>
</dbReference>
<dbReference type="MIM" id="619302">
    <property type="type" value="phenotype"/>
</dbReference>
<dbReference type="neXtProt" id="NX_O60508"/>
<dbReference type="OpenTargets" id="ENSG00000168438"/>
<dbReference type="PharmGKB" id="PA134891332"/>
<dbReference type="VEuPathDB" id="HostDB:ENSG00000168438"/>
<dbReference type="eggNOG" id="KOG0282">
    <property type="taxonomic scope" value="Eukaryota"/>
</dbReference>
<dbReference type="GeneTree" id="ENSGT00530000063583"/>
<dbReference type="HOGENOM" id="CLU_022571_2_1_1"/>
<dbReference type="InParanoid" id="O60508"/>
<dbReference type="OMA" id="TLWHPHE"/>
<dbReference type="OrthoDB" id="10257301at2759"/>
<dbReference type="PAN-GO" id="O60508">
    <property type="GO annotations" value="3 GO annotations based on evolutionary models"/>
</dbReference>
<dbReference type="PhylomeDB" id="O60508"/>
<dbReference type="TreeFam" id="TF101064"/>
<dbReference type="PathwayCommons" id="O60508"/>
<dbReference type="Reactome" id="R-HSA-159236">
    <property type="pathway name" value="Transport of Mature mRNA derived from an Intron-Containing Transcript"/>
</dbReference>
<dbReference type="Reactome" id="R-HSA-72163">
    <property type="pathway name" value="mRNA Splicing - Major Pathway"/>
</dbReference>
<dbReference type="Reactome" id="R-HSA-72187">
    <property type="pathway name" value="mRNA 3'-end processing"/>
</dbReference>
<dbReference type="Reactome" id="R-HSA-73856">
    <property type="pathway name" value="RNA Polymerase II Transcription Termination"/>
</dbReference>
<dbReference type="SignaLink" id="O60508"/>
<dbReference type="BioGRID-ORCS" id="51362">
    <property type="hits" value="580 hits in 1163 CRISPR screens"/>
</dbReference>
<dbReference type="ChiTaRS" id="CDC40">
    <property type="organism name" value="human"/>
</dbReference>
<dbReference type="GeneWiki" id="CDC40"/>
<dbReference type="GenomeRNAi" id="51362"/>
<dbReference type="Pharos" id="O60508">
    <property type="development level" value="Tbio"/>
</dbReference>
<dbReference type="PRO" id="PR:O60508"/>
<dbReference type="Proteomes" id="UP000005640">
    <property type="component" value="Chromosome 6"/>
</dbReference>
<dbReference type="RNAct" id="O60508">
    <property type="molecule type" value="protein"/>
</dbReference>
<dbReference type="Bgee" id="ENSG00000168438">
    <property type="expression patterns" value="Expressed in middle temporal gyrus and 212 other cell types or tissues"/>
</dbReference>
<dbReference type="ExpressionAtlas" id="O60508">
    <property type="expression patterns" value="baseline and differential"/>
</dbReference>
<dbReference type="GO" id="GO:0071013">
    <property type="term" value="C:catalytic step 2 spliceosome"/>
    <property type="evidence" value="ECO:0000314"/>
    <property type="project" value="UniProtKB"/>
</dbReference>
<dbReference type="GO" id="GO:0016607">
    <property type="term" value="C:nuclear speck"/>
    <property type="evidence" value="ECO:0000314"/>
    <property type="project" value="UniProtKB"/>
</dbReference>
<dbReference type="GO" id="GO:0005654">
    <property type="term" value="C:nucleoplasm"/>
    <property type="evidence" value="ECO:0000314"/>
    <property type="project" value="HPA"/>
</dbReference>
<dbReference type="GO" id="GO:0071007">
    <property type="term" value="C:U2-type catalytic step 2 spliceosome"/>
    <property type="evidence" value="ECO:0000314"/>
    <property type="project" value="UniProtKB"/>
</dbReference>
<dbReference type="GO" id="GO:0003729">
    <property type="term" value="F:mRNA binding"/>
    <property type="evidence" value="ECO:0000318"/>
    <property type="project" value="GO_Central"/>
</dbReference>
<dbReference type="GO" id="GO:0003723">
    <property type="term" value="F:RNA binding"/>
    <property type="evidence" value="ECO:0007005"/>
    <property type="project" value="UniProtKB"/>
</dbReference>
<dbReference type="GO" id="GO:1990403">
    <property type="term" value="P:embryonic brain development"/>
    <property type="evidence" value="ECO:0000315"/>
    <property type="project" value="UniProtKB"/>
</dbReference>
<dbReference type="GO" id="GO:0000398">
    <property type="term" value="P:mRNA splicing, via spliceosome"/>
    <property type="evidence" value="ECO:0000314"/>
    <property type="project" value="UniProtKB"/>
</dbReference>
<dbReference type="CDD" id="cd00200">
    <property type="entry name" value="WD40"/>
    <property type="match status" value="1"/>
</dbReference>
<dbReference type="FunFam" id="2.130.10.10:FF:000034">
    <property type="entry name" value="Pre-mRNA-processing factor 17, putative"/>
    <property type="match status" value="1"/>
</dbReference>
<dbReference type="Gene3D" id="2.130.10.10">
    <property type="entry name" value="YVTN repeat-like/Quinoprotein amine dehydrogenase"/>
    <property type="match status" value="1"/>
</dbReference>
<dbReference type="InterPro" id="IPR032847">
    <property type="entry name" value="PRPF17"/>
</dbReference>
<dbReference type="InterPro" id="IPR015943">
    <property type="entry name" value="WD40/YVTN_repeat-like_dom_sf"/>
</dbReference>
<dbReference type="InterPro" id="IPR019775">
    <property type="entry name" value="WD40_repeat_CS"/>
</dbReference>
<dbReference type="InterPro" id="IPR036322">
    <property type="entry name" value="WD40_repeat_dom_sf"/>
</dbReference>
<dbReference type="InterPro" id="IPR001680">
    <property type="entry name" value="WD40_rpt"/>
</dbReference>
<dbReference type="PANTHER" id="PTHR43979">
    <property type="entry name" value="PRE-MRNA-PROCESSING FACTOR 17"/>
    <property type="match status" value="1"/>
</dbReference>
<dbReference type="PANTHER" id="PTHR43979:SF1">
    <property type="entry name" value="PRE-MRNA-PROCESSING FACTOR 17"/>
    <property type="match status" value="1"/>
</dbReference>
<dbReference type="Pfam" id="PF00400">
    <property type="entry name" value="WD40"/>
    <property type="match status" value="6"/>
</dbReference>
<dbReference type="SMART" id="SM00320">
    <property type="entry name" value="WD40"/>
    <property type="match status" value="7"/>
</dbReference>
<dbReference type="SUPFAM" id="SSF50978">
    <property type="entry name" value="WD40 repeat-like"/>
    <property type="match status" value="1"/>
</dbReference>
<dbReference type="PROSITE" id="PS00678">
    <property type="entry name" value="WD_REPEATS_1"/>
    <property type="match status" value="1"/>
</dbReference>
<dbReference type="PROSITE" id="PS50082">
    <property type="entry name" value="WD_REPEATS_2"/>
    <property type="match status" value="5"/>
</dbReference>
<dbReference type="PROSITE" id="PS50294">
    <property type="entry name" value="WD_REPEATS_REGION"/>
    <property type="match status" value="1"/>
</dbReference>
<keyword id="KW-0002">3D-structure</keyword>
<keyword id="KW-0225">Disease variant</keyword>
<keyword id="KW-0991">Intellectual disability</keyword>
<keyword id="KW-0507">mRNA processing</keyword>
<keyword id="KW-0508">mRNA splicing</keyword>
<keyword id="KW-0539">Nucleus</keyword>
<keyword id="KW-0597">Phosphoprotein</keyword>
<keyword id="KW-1267">Proteomics identification</keyword>
<keyword id="KW-1185">Reference proteome</keyword>
<keyword id="KW-0677">Repeat</keyword>
<keyword id="KW-0747">Spliceosome</keyword>
<keyword id="KW-0853">WD repeat</keyword>
<sequence length="579" mass="65521">MSAAIAALAASYGSGSGSESDSDSESSRCPLPAADSLMHLTKSPSSKPSLAVAVDSAPEVAVKEDLETGVHLDPAVKEVQYNPTYETMFAPEFGPENPFRTQQMAAPRNMLSGYAEPAHINDFMFEQQRRTFATYGYALDPSLDNHQVSAKYIGSVEEAEKNQGLTVFETGQKKTEKRKKFKENDASNIDGFLGPWAKYVDEKDVAKPSEEEQKELDEITAKRQKKGKQEEEKPGEEKTILHVKEMYDYQGRSYLHIPQDVGVNLRSTMPPEKCYLPKKQIHVWSGHTKGVSAVRLFPLSGHLLLSCSMDCKIKLWEVYGERRCLRTFIGHSKAVRDICFNTAGTQFLSAAYDRYLKLWDTETGQCISRFTNRKVPYCVKFNPDEDKQNLFVAGMSDKKIVQWDIRSGEIVQEYDRHLGAVNTIVFVDENRRFVSTSDDKSLRVWEWDIPVDFKYIAEPSMHSMPAVTLSPNGKWLACQSMDNQILIFGAQNRFRLNKKKIFKGHMVAGYACQVDFSPDMSYVISGDGNGKLNIWDWKTTKLYSRFKAHDKVCIGAVWHPHETSKVITCGWDGLIKLWD</sequence>
<gene>
    <name type="primary">CDC40</name>
    <name type="synonym">EHB3</name>
    <name type="synonym">PRP17</name>
    <name type="synonym">PRPF17</name>
</gene>
<comment type="function">
    <text evidence="3 4 5 6 7 8 9 10">Required for pre-mRNA splicing as component of the activated spliceosome (PubMed:33220177). Plays an important role in embryonic brain development; this function does not require proline isomerization (PubMed:33220177).</text>
</comment>
<comment type="subunit">
    <text evidence="2 3 4 5 6 7 8 9">Component of the pre-catalytic and catalytic spliceosome complexes (PubMed:11991638, PubMed:28076346, PubMed:28502770, PubMed:29301961, PubMed:29360106, PubMed:29361316). Component of the postcatalytic spliceosome P complex (PubMed:30705154). Interacts with PPIL1; this interaction leads to CDC40 isomerization (PubMed:33220177).</text>
</comment>
<comment type="interaction">
    <interactant intactId="EBI-2557812">
        <id>O60508</id>
    </interactant>
    <interactant intactId="EBI-395746">
        <id>Q9UMS4</id>
        <label>PRPF19</label>
    </interactant>
    <organismsDiffer>false</organismsDiffer>
    <experiments>5</experiments>
</comment>
<comment type="subcellular location">
    <subcellularLocation>
        <location evidence="3 4 5 6 7 8">Nucleus</location>
    </subcellularLocation>
    <subcellularLocation>
        <location evidence="10">Nucleus speckle</location>
    </subcellularLocation>
</comment>
<comment type="PTM">
    <text evidence="9">Undergoes isomerization of the peptide bond between Gly-94 and Pro-95. The reaction is catalyzed by PPIL1.</text>
</comment>
<comment type="disease" evidence="9">
    <disease id="DI-06088">
        <name>Pontocerebellar hypoplasia 15</name>
        <acronym>PCH15</acronym>
        <description>A form of pontocerebellar hypoplasia, a disorder characterized by structural defects of the pons and cerebellum, evident upon brain imaging. PCH15 is a severe autosomal recessive form characterized by progressive microcephaly, and poor or absent psychomotor development with severely impaired intellectual development apparent from birth. Other features may include spastic quadriplegia, early-onset seizures, and chronic anemia and thrombocytopenia.</description>
        <dbReference type="MIM" id="619302"/>
    </disease>
    <text>The disease is caused by variants affecting the gene represented in this entry.</text>
</comment>
<comment type="sequence caution" evidence="11">
    <conflict type="erroneous initiation">
        <sequence resource="EMBL-CDS" id="AAC25166"/>
    </conflict>
</comment>
<accession>O60508</accession>
<accession>B2RBC5</accession>
<accession>O75471</accession>
<accession>Q5SRN0</accession>
<accession>Q9UPG1</accession>